<accession>Q7NN39</accession>
<sequence>MSPLQEIGTAVRMTAIFWIGCGLAYPLIFTGFAQVAFPDQANGSLVRNAQNQVIGSSLIGQKFTSERYFHGRPSSIDYKAEASGASQLAPTNKVLIERVKADAAAFEAQNGTKPTIDLVTTPGSGLDPHITPAGAAVQTARVSRARNLAPEQVRKLVSQYTEGRFLGIFGEPRVNVLALNLALDGIRR</sequence>
<proteinExistence type="inferred from homology"/>
<gene>
    <name evidence="1" type="primary">kdpC</name>
    <name type="ordered locus">glr0575</name>
</gene>
<evidence type="ECO:0000255" key="1">
    <source>
        <dbReference type="HAMAP-Rule" id="MF_00276"/>
    </source>
</evidence>
<organism>
    <name type="scientific">Gloeobacter violaceus (strain ATCC 29082 / PCC 7421)</name>
    <dbReference type="NCBI Taxonomy" id="251221"/>
    <lineage>
        <taxon>Bacteria</taxon>
        <taxon>Bacillati</taxon>
        <taxon>Cyanobacteriota</taxon>
        <taxon>Cyanophyceae</taxon>
        <taxon>Gloeobacterales</taxon>
        <taxon>Gloeobacteraceae</taxon>
        <taxon>Gloeobacter</taxon>
    </lineage>
</organism>
<reference key="1">
    <citation type="journal article" date="2003" name="DNA Res.">
        <title>Complete genome structure of Gloeobacter violaceus PCC 7421, a cyanobacterium that lacks thylakoids.</title>
        <authorList>
            <person name="Nakamura Y."/>
            <person name="Kaneko T."/>
            <person name="Sato S."/>
            <person name="Mimuro M."/>
            <person name="Miyashita H."/>
            <person name="Tsuchiya T."/>
            <person name="Sasamoto S."/>
            <person name="Watanabe A."/>
            <person name="Kawashima K."/>
            <person name="Kishida Y."/>
            <person name="Kiyokawa C."/>
            <person name="Kohara M."/>
            <person name="Matsumoto M."/>
            <person name="Matsuno A."/>
            <person name="Nakazaki N."/>
            <person name="Shimpo S."/>
            <person name="Takeuchi C."/>
            <person name="Yamada M."/>
            <person name="Tabata S."/>
        </authorList>
    </citation>
    <scope>NUCLEOTIDE SEQUENCE [LARGE SCALE GENOMIC DNA]</scope>
    <source>
        <strain>ATCC 29082 / PCC 7421</strain>
    </source>
</reference>
<name>KDPC_GLOVI</name>
<protein>
    <recommendedName>
        <fullName evidence="1">Potassium-transporting ATPase KdpC subunit</fullName>
    </recommendedName>
    <alternativeName>
        <fullName evidence="1">ATP phosphohydrolase [potassium-transporting] C chain</fullName>
    </alternativeName>
    <alternativeName>
        <fullName evidence="1">Potassium-binding and translocating subunit C</fullName>
    </alternativeName>
    <alternativeName>
        <fullName evidence="1">Potassium-translocating ATPase C chain</fullName>
    </alternativeName>
</protein>
<dbReference type="EMBL" id="BA000045">
    <property type="protein sequence ID" value="BAC88516.1"/>
    <property type="molecule type" value="Genomic_DNA"/>
</dbReference>
<dbReference type="RefSeq" id="NP_923521.1">
    <property type="nucleotide sequence ID" value="NC_005125.1"/>
</dbReference>
<dbReference type="RefSeq" id="WP_011140578.1">
    <property type="nucleotide sequence ID" value="NC_005125.1"/>
</dbReference>
<dbReference type="SMR" id="Q7NN39"/>
<dbReference type="FunCoup" id="Q7NN39">
    <property type="interactions" value="27"/>
</dbReference>
<dbReference type="STRING" id="251221.gene:10758048"/>
<dbReference type="EnsemblBacteria" id="BAC88516">
    <property type="protein sequence ID" value="BAC88516"/>
    <property type="gene ID" value="BAC88516"/>
</dbReference>
<dbReference type="KEGG" id="gvi:glr0575"/>
<dbReference type="PATRIC" id="fig|251221.4.peg.583"/>
<dbReference type="eggNOG" id="COG2156">
    <property type="taxonomic scope" value="Bacteria"/>
</dbReference>
<dbReference type="HOGENOM" id="CLU_077094_2_0_3"/>
<dbReference type="InParanoid" id="Q7NN39"/>
<dbReference type="OrthoDB" id="9809491at2"/>
<dbReference type="PhylomeDB" id="Q7NN39"/>
<dbReference type="Proteomes" id="UP000000557">
    <property type="component" value="Chromosome"/>
</dbReference>
<dbReference type="GO" id="GO:0005886">
    <property type="term" value="C:plasma membrane"/>
    <property type="evidence" value="ECO:0007669"/>
    <property type="project" value="UniProtKB-SubCell"/>
</dbReference>
<dbReference type="GO" id="GO:0005524">
    <property type="term" value="F:ATP binding"/>
    <property type="evidence" value="ECO:0007669"/>
    <property type="project" value="UniProtKB-UniRule"/>
</dbReference>
<dbReference type="GO" id="GO:0008556">
    <property type="term" value="F:P-type potassium transmembrane transporter activity"/>
    <property type="evidence" value="ECO:0000318"/>
    <property type="project" value="GO_Central"/>
</dbReference>
<dbReference type="GO" id="GO:0071805">
    <property type="term" value="P:potassium ion transmembrane transport"/>
    <property type="evidence" value="ECO:0000318"/>
    <property type="project" value="GO_Central"/>
</dbReference>
<dbReference type="HAMAP" id="MF_00276">
    <property type="entry name" value="KdpC"/>
    <property type="match status" value="1"/>
</dbReference>
<dbReference type="InterPro" id="IPR003820">
    <property type="entry name" value="KdpC"/>
</dbReference>
<dbReference type="NCBIfam" id="TIGR00681">
    <property type="entry name" value="kdpC"/>
    <property type="match status" value="1"/>
</dbReference>
<dbReference type="NCBIfam" id="NF001454">
    <property type="entry name" value="PRK00315.1"/>
    <property type="match status" value="1"/>
</dbReference>
<dbReference type="PANTHER" id="PTHR30042">
    <property type="entry name" value="POTASSIUM-TRANSPORTING ATPASE C CHAIN"/>
    <property type="match status" value="1"/>
</dbReference>
<dbReference type="PANTHER" id="PTHR30042:SF2">
    <property type="entry name" value="POTASSIUM-TRANSPORTING ATPASE KDPC SUBUNIT"/>
    <property type="match status" value="1"/>
</dbReference>
<dbReference type="Pfam" id="PF02669">
    <property type="entry name" value="KdpC"/>
    <property type="match status" value="1"/>
</dbReference>
<dbReference type="PIRSF" id="PIRSF001296">
    <property type="entry name" value="K_ATPase_KdpC"/>
    <property type="match status" value="1"/>
</dbReference>
<feature type="chain" id="PRO_1000022288" description="Potassium-transporting ATPase KdpC subunit">
    <location>
        <begin position="1"/>
        <end position="188"/>
    </location>
</feature>
<feature type="transmembrane region" description="Helical" evidence="1">
    <location>
        <begin position="13"/>
        <end position="33"/>
    </location>
</feature>
<comment type="function">
    <text evidence="1">Part of the high-affinity ATP-driven potassium transport (or Kdp) system, which catalyzes the hydrolysis of ATP coupled with the electrogenic transport of potassium into the cytoplasm. This subunit acts as a catalytic chaperone that increases the ATP-binding affinity of the ATP-hydrolyzing subunit KdpB by the formation of a transient KdpB/KdpC/ATP ternary complex.</text>
</comment>
<comment type="subunit">
    <text evidence="1">The system is composed of three essential subunits: KdpA, KdpB and KdpC.</text>
</comment>
<comment type="subcellular location">
    <subcellularLocation>
        <location evidence="1">Cell inner membrane</location>
        <topology evidence="1">Single-pass membrane protein</topology>
    </subcellularLocation>
</comment>
<comment type="similarity">
    <text evidence="1">Belongs to the KdpC family.</text>
</comment>
<keyword id="KW-0067">ATP-binding</keyword>
<keyword id="KW-0997">Cell inner membrane</keyword>
<keyword id="KW-1003">Cell membrane</keyword>
<keyword id="KW-0406">Ion transport</keyword>
<keyword id="KW-0472">Membrane</keyword>
<keyword id="KW-0547">Nucleotide-binding</keyword>
<keyword id="KW-0630">Potassium</keyword>
<keyword id="KW-0633">Potassium transport</keyword>
<keyword id="KW-1185">Reference proteome</keyword>
<keyword id="KW-0812">Transmembrane</keyword>
<keyword id="KW-1133">Transmembrane helix</keyword>
<keyword id="KW-0813">Transport</keyword>